<keyword id="KW-0067">ATP-binding</keyword>
<keyword id="KW-0143">Chaperone</keyword>
<keyword id="KW-0547">Nucleotide-binding</keyword>
<keyword id="KW-0597">Phosphoprotein</keyword>
<keyword id="KW-0346">Stress response</keyword>
<gene>
    <name evidence="1" type="primary">dnaK</name>
    <name type="ordered locus">PXO_01185</name>
</gene>
<name>DNAK_XANOP</name>
<feature type="chain" id="PRO_1000119777" description="Chaperone protein DnaK">
    <location>
        <begin position="1"/>
        <end position="641"/>
    </location>
</feature>
<feature type="region of interest" description="Disordered" evidence="2">
    <location>
        <begin position="605"/>
        <end position="627"/>
    </location>
</feature>
<feature type="compositionally biased region" description="Low complexity" evidence="2">
    <location>
        <begin position="605"/>
        <end position="623"/>
    </location>
</feature>
<feature type="modified residue" description="Phosphothreonine; by autocatalysis" evidence="1">
    <location>
        <position position="200"/>
    </location>
</feature>
<protein>
    <recommendedName>
        <fullName evidence="1">Chaperone protein DnaK</fullName>
    </recommendedName>
    <alternativeName>
        <fullName evidence="1">HSP70</fullName>
    </alternativeName>
    <alternativeName>
        <fullName evidence="1">Heat shock 70 kDa protein</fullName>
    </alternativeName>
    <alternativeName>
        <fullName evidence="1">Heat shock protein 70</fullName>
    </alternativeName>
</protein>
<reference key="1">
    <citation type="journal article" date="2008" name="BMC Genomics">
        <title>Genome sequence and rapid evolution of the rice pathogen Xanthomonas oryzae pv. oryzae PXO99A.</title>
        <authorList>
            <person name="Salzberg S.L."/>
            <person name="Sommer D.D."/>
            <person name="Schatz M.C."/>
            <person name="Phillippy A.M."/>
            <person name="Rabinowicz P.D."/>
            <person name="Tsuge S."/>
            <person name="Furutani A."/>
            <person name="Ochiai H."/>
            <person name="Delcher A.L."/>
            <person name="Kelley D."/>
            <person name="Madupu R."/>
            <person name="Puiu D."/>
            <person name="Radune D."/>
            <person name="Shumway M."/>
            <person name="Trapnell C."/>
            <person name="Aparna G."/>
            <person name="Jha G."/>
            <person name="Pandey A."/>
            <person name="Patil P.B."/>
            <person name="Ishihara H."/>
            <person name="Meyer D.F."/>
            <person name="Szurek B."/>
            <person name="Verdier V."/>
            <person name="Koebnik R."/>
            <person name="Dow J.M."/>
            <person name="Ryan R.P."/>
            <person name="Hirata H."/>
            <person name="Tsuyumu S."/>
            <person name="Won Lee S."/>
            <person name="Seo Y.-S."/>
            <person name="Sriariyanum M."/>
            <person name="Ronald P.C."/>
            <person name="Sonti R.V."/>
            <person name="Van Sluys M.-A."/>
            <person name="Leach J.E."/>
            <person name="White F.F."/>
            <person name="Bogdanove A.J."/>
        </authorList>
    </citation>
    <scope>NUCLEOTIDE SEQUENCE [LARGE SCALE GENOMIC DNA]</scope>
    <source>
        <strain>PXO99A</strain>
    </source>
</reference>
<sequence length="641" mass="68778">MGKIIGIDLGTTNSCVSIMDGGKARVIENSEGDRTTPSIVAYTKDGEVLVGASAKRQAVTNPKNTFYAVKRLIGRKFTDAEVQKDISHVPYGILAHDNGDAWVQTSDAKRMAPQEISARVLEKMKKTAEDYLGEKVTEAVITVPAYFNDSQRQATKDAGRIAGLDVKRIINEPTAAALAYGLDKKGGDRKIAVYDLGGGTFDVSIIEIAEVDGEKQFEVLATNGDTFLGGEDFDNRVIEYLVDEFNKDQGIDLRKDPLALQRLKDAAERAKIELSSSQQTEVNLPYVTADASGPKHLNIKLTRAKLEALVEDLVKKSIEPCRTALNDAGLRASDINEVILVGGQTRMPKVQQAVADFFGKEPRKDVNPDEAVAVGAAIQGGVLAGDVKDVLLLDVTPLSLGIETMGGVFTKIIEKNTTIPTKASQTFSTAEDNQSAVTVHVLQGEREQARFNKSLAKFDLSGIEPAPRGMPQVEVSFDIDANGILHVSAKDKKTNKEQKVEIKAGSGLSDEEIQRMVADAEANREEDKKFHELVQARNQADGLIHATRTAITEHGSKVGGDVIGKVEAALSDLETAMKGDDKAQIEARTKTLEEAGQSLYAAAAAAEQGGSADAASGNAQASKAADDVVDAEFTEVKDDKK</sequence>
<dbReference type="EMBL" id="CP000967">
    <property type="protein sequence ID" value="ACD59505.1"/>
    <property type="molecule type" value="Genomic_DNA"/>
</dbReference>
<dbReference type="RefSeq" id="WP_011408354.1">
    <property type="nucleotide sequence ID" value="NC_010717.2"/>
</dbReference>
<dbReference type="SMR" id="B2SQU4"/>
<dbReference type="KEGG" id="xop:PXO_01185"/>
<dbReference type="eggNOG" id="COG0443">
    <property type="taxonomic scope" value="Bacteria"/>
</dbReference>
<dbReference type="HOGENOM" id="CLU_005965_2_1_6"/>
<dbReference type="Proteomes" id="UP000001740">
    <property type="component" value="Chromosome"/>
</dbReference>
<dbReference type="GO" id="GO:0005524">
    <property type="term" value="F:ATP binding"/>
    <property type="evidence" value="ECO:0007669"/>
    <property type="project" value="UniProtKB-UniRule"/>
</dbReference>
<dbReference type="GO" id="GO:0140662">
    <property type="term" value="F:ATP-dependent protein folding chaperone"/>
    <property type="evidence" value="ECO:0007669"/>
    <property type="project" value="InterPro"/>
</dbReference>
<dbReference type="GO" id="GO:0051082">
    <property type="term" value="F:unfolded protein binding"/>
    <property type="evidence" value="ECO:0007669"/>
    <property type="project" value="InterPro"/>
</dbReference>
<dbReference type="CDD" id="cd10234">
    <property type="entry name" value="ASKHA_NBD_HSP70_DnaK-like"/>
    <property type="match status" value="1"/>
</dbReference>
<dbReference type="FunFam" id="2.60.34.10:FF:000014">
    <property type="entry name" value="Chaperone protein DnaK HSP70"/>
    <property type="match status" value="1"/>
</dbReference>
<dbReference type="FunFam" id="3.30.30.30:FF:000003">
    <property type="entry name" value="Heat shock protein 9"/>
    <property type="match status" value="1"/>
</dbReference>
<dbReference type="FunFam" id="1.20.1270.10:FF:000001">
    <property type="entry name" value="Molecular chaperone DnaK"/>
    <property type="match status" value="1"/>
</dbReference>
<dbReference type="FunFam" id="3.30.420.40:FF:000004">
    <property type="entry name" value="Molecular chaperone DnaK"/>
    <property type="match status" value="1"/>
</dbReference>
<dbReference type="FunFam" id="3.90.640.10:FF:000003">
    <property type="entry name" value="Molecular chaperone DnaK"/>
    <property type="match status" value="1"/>
</dbReference>
<dbReference type="Gene3D" id="1.20.1270.10">
    <property type="match status" value="1"/>
</dbReference>
<dbReference type="Gene3D" id="3.30.420.40">
    <property type="match status" value="2"/>
</dbReference>
<dbReference type="Gene3D" id="3.90.640.10">
    <property type="entry name" value="Actin, Chain A, domain 4"/>
    <property type="match status" value="1"/>
</dbReference>
<dbReference type="Gene3D" id="2.60.34.10">
    <property type="entry name" value="Substrate Binding Domain Of DNAk, Chain A, domain 1"/>
    <property type="match status" value="1"/>
</dbReference>
<dbReference type="HAMAP" id="MF_00332">
    <property type="entry name" value="DnaK"/>
    <property type="match status" value="1"/>
</dbReference>
<dbReference type="InterPro" id="IPR043129">
    <property type="entry name" value="ATPase_NBD"/>
</dbReference>
<dbReference type="InterPro" id="IPR012725">
    <property type="entry name" value="Chaperone_DnaK"/>
</dbReference>
<dbReference type="InterPro" id="IPR018181">
    <property type="entry name" value="Heat_shock_70_CS"/>
</dbReference>
<dbReference type="InterPro" id="IPR029048">
    <property type="entry name" value="HSP70_C_sf"/>
</dbReference>
<dbReference type="InterPro" id="IPR029047">
    <property type="entry name" value="HSP70_peptide-bd_sf"/>
</dbReference>
<dbReference type="InterPro" id="IPR013126">
    <property type="entry name" value="Hsp_70_fam"/>
</dbReference>
<dbReference type="NCBIfam" id="NF001413">
    <property type="entry name" value="PRK00290.1"/>
    <property type="match status" value="1"/>
</dbReference>
<dbReference type="NCBIfam" id="NF003520">
    <property type="entry name" value="PRK05183.1"/>
    <property type="match status" value="1"/>
</dbReference>
<dbReference type="NCBIfam" id="TIGR02350">
    <property type="entry name" value="prok_dnaK"/>
    <property type="match status" value="1"/>
</dbReference>
<dbReference type="PANTHER" id="PTHR19375">
    <property type="entry name" value="HEAT SHOCK PROTEIN 70KDA"/>
    <property type="match status" value="1"/>
</dbReference>
<dbReference type="Pfam" id="PF00012">
    <property type="entry name" value="HSP70"/>
    <property type="match status" value="1"/>
</dbReference>
<dbReference type="PRINTS" id="PR00301">
    <property type="entry name" value="HEATSHOCK70"/>
</dbReference>
<dbReference type="SUPFAM" id="SSF53067">
    <property type="entry name" value="Actin-like ATPase domain"/>
    <property type="match status" value="2"/>
</dbReference>
<dbReference type="SUPFAM" id="SSF100920">
    <property type="entry name" value="Heat shock protein 70kD (HSP70), peptide-binding domain"/>
    <property type="match status" value="1"/>
</dbReference>
<dbReference type="PROSITE" id="PS00297">
    <property type="entry name" value="HSP70_1"/>
    <property type="match status" value="1"/>
</dbReference>
<dbReference type="PROSITE" id="PS00329">
    <property type="entry name" value="HSP70_2"/>
    <property type="match status" value="1"/>
</dbReference>
<dbReference type="PROSITE" id="PS01036">
    <property type="entry name" value="HSP70_3"/>
    <property type="match status" value="1"/>
</dbReference>
<organism>
    <name type="scientific">Xanthomonas oryzae pv. oryzae (strain PXO99A)</name>
    <dbReference type="NCBI Taxonomy" id="360094"/>
    <lineage>
        <taxon>Bacteria</taxon>
        <taxon>Pseudomonadati</taxon>
        <taxon>Pseudomonadota</taxon>
        <taxon>Gammaproteobacteria</taxon>
        <taxon>Lysobacterales</taxon>
        <taxon>Lysobacteraceae</taxon>
        <taxon>Xanthomonas</taxon>
    </lineage>
</organism>
<comment type="function">
    <text evidence="1">Acts as a chaperone.</text>
</comment>
<comment type="induction">
    <text evidence="1">By stress conditions e.g. heat shock.</text>
</comment>
<comment type="similarity">
    <text evidence="1">Belongs to the heat shock protein 70 family.</text>
</comment>
<proteinExistence type="inferred from homology"/>
<evidence type="ECO:0000255" key="1">
    <source>
        <dbReference type="HAMAP-Rule" id="MF_00332"/>
    </source>
</evidence>
<evidence type="ECO:0000256" key="2">
    <source>
        <dbReference type="SAM" id="MobiDB-lite"/>
    </source>
</evidence>
<accession>B2SQU4</accession>